<sequence length="209" mass="23324">MLVLIKHPLIEIKLTEMRAAETSHKVFRSNLDEIASLMVYEVMRNYQTKPKKVITPIGVETIGKSFDREVVIIPILRAGLGMMQGILAMVPEARVGHIGIYRDEKTFQPIDYFFKIPDVPKDSYIMVVDPMLATGVSANDAINKLVNLGFSNIKLICLVGVQKGIDLIQKNHPNVDIYLASQDEKLNENNYIIPGLGDAGDRIFGTKAK</sequence>
<protein>
    <recommendedName>
        <fullName evidence="1">Uracil phosphoribosyltransferase</fullName>
        <ecNumber evidence="1">2.4.2.9</ecNumber>
    </recommendedName>
    <alternativeName>
        <fullName evidence="1">UMP pyrophosphorylase</fullName>
    </alternativeName>
    <alternativeName>
        <fullName evidence="1">UPRTase</fullName>
    </alternativeName>
</protein>
<organism>
    <name type="scientific">Metamycoplasma arthritidis (strain 158L3-1)</name>
    <name type="common">Mycoplasma arthritidis</name>
    <dbReference type="NCBI Taxonomy" id="243272"/>
    <lineage>
        <taxon>Bacteria</taxon>
        <taxon>Bacillati</taxon>
        <taxon>Mycoplasmatota</taxon>
        <taxon>Mycoplasmoidales</taxon>
        <taxon>Metamycoplasmataceae</taxon>
        <taxon>Metamycoplasma</taxon>
    </lineage>
</organism>
<keyword id="KW-0021">Allosteric enzyme</keyword>
<keyword id="KW-0328">Glycosyltransferase</keyword>
<keyword id="KW-0342">GTP-binding</keyword>
<keyword id="KW-0460">Magnesium</keyword>
<keyword id="KW-0547">Nucleotide-binding</keyword>
<keyword id="KW-1185">Reference proteome</keyword>
<keyword id="KW-0808">Transferase</keyword>
<name>UPP_META1</name>
<feature type="chain" id="PRO_1000139141" description="Uracil phosphoribosyltransferase">
    <location>
        <begin position="1"/>
        <end position="209"/>
    </location>
</feature>
<feature type="binding site" evidence="1">
    <location>
        <position position="77"/>
    </location>
    <ligand>
        <name>5-phospho-alpha-D-ribose 1-diphosphate</name>
        <dbReference type="ChEBI" id="CHEBI:58017"/>
    </ligand>
</feature>
<feature type="binding site" evidence="1">
    <location>
        <position position="102"/>
    </location>
    <ligand>
        <name>5-phospho-alpha-D-ribose 1-diphosphate</name>
        <dbReference type="ChEBI" id="CHEBI:58017"/>
    </ligand>
</feature>
<feature type="binding site" evidence="1">
    <location>
        <begin position="129"/>
        <end position="137"/>
    </location>
    <ligand>
        <name>5-phospho-alpha-D-ribose 1-diphosphate</name>
        <dbReference type="ChEBI" id="CHEBI:58017"/>
    </ligand>
</feature>
<feature type="binding site" evidence="1">
    <location>
        <position position="192"/>
    </location>
    <ligand>
        <name>uracil</name>
        <dbReference type="ChEBI" id="CHEBI:17568"/>
    </ligand>
</feature>
<feature type="binding site" evidence="1">
    <location>
        <begin position="197"/>
        <end position="199"/>
    </location>
    <ligand>
        <name>uracil</name>
        <dbReference type="ChEBI" id="CHEBI:17568"/>
    </ligand>
</feature>
<feature type="binding site" evidence="1">
    <location>
        <position position="198"/>
    </location>
    <ligand>
        <name>5-phospho-alpha-D-ribose 1-diphosphate</name>
        <dbReference type="ChEBI" id="CHEBI:58017"/>
    </ligand>
</feature>
<comment type="function">
    <text evidence="1">Catalyzes the conversion of uracil and 5-phospho-alpha-D-ribose 1-diphosphate (PRPP) to UMP and diphosphate.</text>
</comment>
<comment type="catalytic activity">
    <reaction evidence="1">
        <text>UMP + diphosphate = 5-phospho-alpha-D-ribose 1-diphosphate + uracil</text>
        <dbReference type="Rhea" id="RHEA:13017"/>
        <dbReference type="ChEBI" id="CHEBI:17568"/>
        <dbReference type="ChEBI" id="CHEBI:33019"/>
        <dbReference type="ChEBI" id="CHEBI:57865"/>
        <dbReference type="ChEBI" id="CHEBI:58017"/>
        <dbReference type="EC" id="2.4.2.9"/>
    </reaction>
</comment>
<comment type="cofactor">
    <cofactor evidence="1">
        <name>Mg(2+)</name>
        <dbReference type="ChEBI" id="CHEBI:18420"/>
    </cofactor>
    <text evidence="1">Binds 1 Mg(2+) ion per subunit. The magnesium is bound as Mg-PRPP.</text>
</comment>
<comment type="activity regulation">
    <text evidence="1">Allosterically activated by GTP.</text>
</comment>
<comment type="pathway">
    <text evidence="1">Pyrimidine metabolism; UMP biosynthesis via salvage pathway; UMP from uracil: step 1/1.</text>
</comment>
<comment type="similarity">
    <text evidence="1">Belongs to the UPRTase family.</text>
</comment>
<dbReference type="EC" id="2.4.2.9" evidence="1"/>
<dbReference type="EMBL" id="CP001047">
    <property type="protein sequence ID" value="ACF07148.1"/>
    <property type="molecule type" value="Genomic_DNA"/>
</dbReference>
<dbReference type="RefSeq" id="WP_012498105.1">
    <property type="nucleotide sequence ID" value="NC_011025.1"/>
</dbReference>
<dbReference type="SMR" id="B3PM96"/>
<dbReference type="STRING" id="243272.MARTH_orf240"/>
<dbReference type="KEGG" id="mat:MARTH_orf240"/>
<dbReference type="eggNOG" id="COG0035">
    <property type="taxonomic scope" value="Bacteria"/>
</dbReference>
<dbReference type="HOGENOM" id="CLU_067096_2_2_14"/>
<dbReference type="UniPathway" id="UPA00574">
    <property type="reaction ID" value="UER00636"/>
</dbReference>
<dbReference type="Proteomes" id="UP000008812">
    <property type="component" value="Chromosome"/>
</dbReference>
<dbReference type="GO" id="GO:0005525">
    <property type="term" value="F:GTP binding"/>
    <property type="evidence" value="ECO:0007669"/>
    <property type="project" value="UniProtKB-KW"/>
</dbReference>
<dbReference type="GO" id="GO:0000287">
    <property type="term" value="F:magnesium ion binding"/>
    <property type="evidence" value="ECO:0007669"/>
    <property type="project" value="UniProtKB-UniRule"/>
</dbReference>
<dbReference type="GO" id="GO:0004845">
    <property type="term" value="F:uracil phosphoribosyltransferase activity"/>
    <property type="evidence" value="ECO:0007669"/>
    <property type="project" value="UniProtKB-UniRule"/>
</dbReference>
<dbReference type="GO" id="GO:0044206">
    <property type="term" value="P:UMP salvage"/>
    <property type="evidence" value="ECO:0007669"/>
    <property type="project" value="UniProtKB-UniRule"/>
</dbReference>
<dbReference type="GO" id="GO:0006223">
    <property type="term" value="P:uracil salvage"/>
    <property type="evidence" value="ECO:0007669"/>
    <property type="project" value="InterPro"/>
</dbReference>
<dbReference type="CDD" id="cd06223">
    <property type="entry name" value="PRTases_typeI"/>
    <property type="match status" value="1"/>
</dbReference>
<dbReference type="FunFam" id="3.40.50.2020:FF:000003">
    <property type="entry name" value="Uracil phosphoribosyltransferase"/>
    <property type="match status" value="1"/>
</dbReference>
<dbReference type="Gene3D" id="3.40.50.2020">
    <property type="match status" value="1"/>
</dbReference>
<dbReference type="HAMAP" id="MF_01218_B">
    <property type="entry name" value="Upp_B"/>
    <property type="match status" value="1"/>
</dbReference>
<dbReference type="InterPro" id="IPR000836">
    <property type="entry name" value="PRibTrfase_dom"/>
</dbReference>
<dbReference type="InterPro" id="IPR029057">
    <property type="entry name" value="PRTase-like"/>
</dbReference>
<dbReference type="InterPro" id="IPR034332">
    <property type="entry name" value="Upp_B"/>
</dbReference>
<dbReference type="InterPro" id="IPR050054">
    <property type="entry name" value="UPRTase/APRTase"/>
</dbReference>
<dbReference type="InterPro" id="IPR005765">
    <property type="entry name" value="Ura_phspho_trans"/>
</dbReference>
<dbReference type="NCBIfam" id="NF001097">
    <property type="entry name" value="PRK00129.1"/>
    <property type="match status" value="1"/>
</dbReference>
<dbReference type="NCBIfam" id="TIGR01091">
    <property type="entry name" value="upp"/>
    <property type="match status" value="1"/>
</dbReference>
<dbReference type="PANTHER" id="PTHR32315">
    <property type="entry name" value="ADENINE PHOSPHORIBOSYLTRANSFERASE"/>
    <property type="match status" value="1"/>
</dbReference>
<dbReference type="PANTHER" id="PTHR32315:SF4">
    <property type="entry name" value="URACIL PHOSPHORIBOSYLTRANSFERASE, CHLOROPLASTIC"/>
    <property type="match status" value="1"/>
</dbReference>
<dbReference type="Pfam" id="PF14681">
    <property type="entry name" value="UPRTase"/>
    <property type="match status" value="1"/>
</dbReference>
<dbReference type="SUPFAM" id="SSF53271">
    <property type="entry name" value="PRTase-like"/>
    <property type="match status" value="1"/>
</dbReference>
<evidence type="ECO:0000255" key="1">
    <source>
        <dbReference type="HAMAP-Rule" id="MF_01218"/>
    </source>
</evidence>
<accession>B3PM96</accession>
<reference key="1">
    <citation type="journal article" date="2008" name="Infect. Immun.">
        <title>Genome of Mycoplasma arthritidis.</title>
        <authorList>
            <person name="Dybvig K."/>
            <person name="Zuhua C."/>
            <person name="Lao P."/>
            <person name="Jordan D.S."/>
            <person name="French C.T."/>
            <person name="Tu A.H."/>
            <person name="Loraine A.E."/>
        </authorList>
    </citation>
    <scope>NUCLEOTIDE SEQUENCE [LARGE SCALE GENOMIC DNA]</scope>
    <source>
        <strain>158L3-1</strain>
    </source>
</reference>
<proteinExistence type="inferred from homology"/>
<gene>
    <name evidence="1" type="primary">upp</name>
    <name type="ordered locus">MARTH_orf240</name>
</gene>